<organism>
    <name type="scientific">Francisella philomiragia subsp. philomiragia (strain ATCC 25017 / CCUG 19701 / FSC 153 / O#319-036)</name>
    <dbReference type="NCBI Taxonomy" id="484022"/>
    <lineage>
        <taxon>Bacteria</taxon>
        <taxon>Pseudomonadati</taxon>
        <taxon>Pseudomonadota</taxon>
        <taxon>Gammaproteobacteria</taxon>
        <taxon>Thiotrichales</taxon>
        <taxon>Francisellaceae</taxon>
        <taxon>Francisella</taxon>
    </lineage>
</organism>
<sequence length="351" mass="38452">MKALAKLKKEPGIWMIDDAPMPEYGYNDVLIKIKKTAICGTDLHIYNWDKWSQATIPVPMITGHEFAGEVVAKGNGVTSVDVGDRVSGEGHLVCGQCRNCRAGKRHLCRKTIGIGVNVQGAFAEYLVMPAVNVFKIPDSISDDIASTFDPMGNAIHTALSFNLTGEDVLITGAGPIGLMAVKIARFCGARRIVITDINKYRLQMARDFGATVAVNVSEFQNQQQLTAQMRKVMSEIGMTEGFDVGLEMSGINSAISMMLDVMNHGGKLSLLGISAGDISVDWGAILFKGLTLKGIYGREMFETWYLMTSMLQAGMDMEPIITHRLHIDDYQKGFEIMKSGQCGKVILDWSR</sequence>
<accession>B0TYR8</accession>
<evidence type="ECO:0000255" key="1">
    <source>
        <dbReference type="HAMAP-Rule" id="MF_00627"/>
    </source>
</evidence>
<dbReference type="EC" id="1.1.1.103" evidence="1"/>
<dbReference type="EMBL" id="CP000937">
    <property type="protein sequence ID" value="ABZ86433.1"/>
    <property type="molecule type" value="Genomic_DNA"/>
</dbReference>
<dbReference type="SMR" id="B0TYR8"/>
<dbReference type="KEGG" id="fph:Fphi_0217"/>
<dbReference type="eggNOG" id="COG1063">
    <property type="taxonomic scope" value="Bacteria"/>
</dbReference>
<dbReference type="HOGENOM" id="CLU_026673_11_0_6"/>
<dbReference type="UniPathway" id="UPA00046">
    <property type="reaction ID" value="UER00505"/>
</dbReference>
<dbReference type="GO" id="GO:0005737">
    <property type="term" value="C:cytoplasm"/>
    <property type="evidence" value="ECO:0007669"/>
    <property type="project" value="UniProtKB-SubCell"/>
</dbReference>
<dbReference type="GO" id="GO:0008743">
    <property type="term" value="F:L-threonine 3-dehydrogenase activity"/>
    <property type="evidence" value="ECO:0007669"/>
    <property type="project" value="UniProtKB-UniRule"/>
</dbReference>
<dbReference type="GO" id="GO:0008270">
    <property type="term" value="F:zinc ion binding"/>
    <property type="evidence" value="ECO:0007669"/>
    <property type="project" value="UniProtKB-UniRule"/>
</dbReference>
<dbReference type="GO" id="GO:0019518">
    <property type="term" value="P:L-threonine catabolic process to glycine"/>
    <property type="evidence" value="ECO:0007669"/>
    <property type="project" value="UniProtKB-UniPathway"/>
</dbReference>
<dbReference type="Gene3D" id="3.90.180.10">
    <property type="entry name" value="Medium-chain alcohol dehydrogenases, catalytic domain"/>
    <property type="match status" value="1"/>
</dbReference>
<dbReference type="Gene3D" id="3.40.50.720">
    <property type="entry name" value="NAD(P)-binding Rossmann-like Domain"/>
    <property type="match status" value="1"/>
</dbReference>
<dbReference type="HAMAP" id="MF_00627">
    <property type="entry name" value="Thr_dehydrog"/>
    <property type="match status" value="1"/>
</dbReference>
<dbReference type="InterPro" id="IPR013149">
    <property type="entry name" value="ADH-like_C"/>
</dbReference>
<dbReference type="InterPro" id="IPR013154">
    <property type="entry name" value="ADH-like_N"/>
</dbReference>
<dbReference type="InterPro" id="IPR002328">
    <property type="entry name" value="ADH_Zn_CS"/>
</dbReference>
<dbReference type="InterPro" id="IPR011032">
    <property type="entry name" value="GroES-like_sf"/>
</dbReference>
<dbReference type="InterPro" id="IPR004627">
    <property type="entry name" value="L-Threonine_3-DHase"/>
</dbReference>
<dbReference type="InterPro" id="IPR036291">
    <property type="entry name" value="NAD(P)-bd_dom_sf"/>
</dbReference>
<dbReference type="InterPro" id="IPR050129">
    <property type="entry name" value="Zn_alcohol_dh"/>
</dbReference>
<dbReference type="NCBIfam" id="NF003808">
    <property type="entry name" value="PRK05396.1"/>
    <property type="match status" value="1"/>
</dbReference>
<dbReference type="NCBIfam" id="TIGR00692">
    <property type="entry name" value="tdh"/>
    <property type="match status" value="1"/>
</dbReference>
<dbReference type="PANTHER" id="PTHR43401">
    <property type="entry name" value="L-THREONINE 3-DEHYDROGENASE"/>
    <property type="match status" value="1"/>
</dbReference>
<dbReference type="PANTHER" id="PTHR43401:SF2">
    <property type="entry name" value="L-THREONINE 3-DEHYDROGENASE"/>
    <property type="match status" value="1"/>
</dbReference>
<dbReference type="Pfam" id="PF08240">
    <property type="entry name" value="ADH_N"/>
    <property type="match status" value="1"/>
</dbReference>
<dbReference type="Pfam" id="PF00107">
    <property type="entry name" value="ADH_zinc_N"/>
    <property type="match status" value="1"/>
</dbReference>
<dbReference type="SUPFAM" id="SSF50129">
    <property type="entry name" value="GroES-like"/>
    <property type="match status" value="1"/>
</dbReference>
<dbReference type="SUPFAM" id="SSF51735">
    <property type="entry name" value="NAD(P)-binding Rossmann-fold domains"/>
    <property type="match status" value="1"/>
</dbReference>
<dbReference type="PROSITE" id="PS00059">
    <property type="entry name" value="ADH_ZINC"/>
    <property type="match status" value="1"/>
</dbReference>
<protein>
    <recommendedName>
        <fullName evidence="1">L-threonine 3-dehydrogenase</fullName>
        <shortName evidence="1">TDH</shortName>
        <ecNumber evidence="1">1.1.1.103</ecNumber>
    </recommendedName>
</protein>
<proteinExistence type="inferred from homology"/>
<keyword id="KW-0963">Cytoplasm</keyword>
<keyword id="KW-0479">Metal-binding</keyword>
<keyword id="KW-0520">NAD</keyword>
<keyword id="KW-0560">Oxidoreductase</keyword>
<keyword id="KW-0862">Zinc</keyword>
<reference key="1">
    <citation type="submission" date="2007-12" db="EMBL/GenBank/DDBJ databases">
        <title>Complete sequence of chromosome of Francisella philomiragia subsp. philomiragia ATCC 25017.</title>
        <authorList>
            <consortium name="US DOE Joint Genome Institute"/>
            <person name="Copeland A."/>
            <person name="Lucas S."/>
            <person name="Lapidus A."/>
            <person name="Barry K."/>
            <person name="Detter J.C."/>
            <person name="Glavina del Rio T."/>
            <person name="Hammon N."/>
            <person name="Israni S."/>
            <person name="Dalin E."/>
            <person name="Tice H."/>
            <person name="Pitluck S."/>
            <person name="Chain P."/>
            <person name="Malfatti S."/>
            <person name="Shin M."/>
            <person name="Vergez L."/>
            <person name="Schmutz J."/>
            <person name="Larimer F."/>
            <person name="Land M."/>
            <person name="Hauser L."/>
            <person name="Richardson P."/>
        </authorList>
    </citation>
    <scope>NUCLEOTIDE SEQUENCE [LARGE SCALE GENOMIC DNA]</scope>
    <source>
        <strain>ATCC 25017 / CCUG 19701 / FSC 153 / O#319-036</strain>
    </source>
</reference>
<name>TDH_FRAP2</name>
<feature type="chain" id="PRO_1000082611" description="L-threonine 3-dehydrogenase">
    <location>
        <begin position="1"/>
        <end position="351"/>
    </location>
</feature>
<feature type="active site" description="Charge relay system" evidence="1">
    <location>
        <position position="41"/>
    </location>
</feature>
<feature type="active site" description="Charge relay system" evidence="1">
    <location>
        <position position="44"/>
    </location>
</feature>
<feature type="binding site" evidence="1">
    <location>
        <position position="39"/>
    </location>
    <ligand>
        <name>Zn(2+)</name>
        <dbReference type="ChEBI" id="CHEBI:29105"/>
        <label>1</label>
        <note>catalytic</note>
    </ligand>
</feature>
<feature type="binding site" evidence="1">
    <location>
        <position position="64"/>
    </location>
    <ligand>
        <name>Zn(2+)</name>
        <dbReference type="ChEBI" id="CHEBI:29105"/>
        <label>1</label>
        <note>catalytic</note>
    </ligand>
</feature>
<feature type="binding site" evidence="1">
    <location>
        <position position="65"/>
    </location>
    <ligand>
        <name>Zn(2+)</name>
        <dbReference type="ChEBI" id="CHEBI:29105"/>
        <label>1</label>
        <note>catalytic</note>
    </ligand>
</feature>
<feature type="binding site" evidence="1">
    <location>
        <position position="94"/>
    </location>
    <ligand>
        <name>Zn(2+)</name>
        <dbReference type="ChEBI" id="CHEBI:29105"/>
        <label>2</label>
    </ligand>
</feature>
<feature type="binding site" evidence="1">
    <location>
        <position position="97"/>
    </location>
    <ligand>
        <name>Zn(2+)</name>
        <dbReference type="ChEBI" id="CHEBI:29105"/>
        <label>2</label>
    </ligand>
</feature>
<feature type="binding site" evidence="1">
    <location>
        <position position="100"/>
    </location>
    <ligand>
        <name>Zn(2+)</name>
        <dbReference type="ChEBI" id="CHEBI:29105"/>
        <label>2</label>
    </ligand>
</feature>
<feature type="binding site" evidence="1">
    <location>
        <position position="108"/>
    </location>
    <ligand>
        <name>Zn(2+)</name>
        <dbReference type="ChEBI" id="CHEBI:29105"/>
        <label>2</label>
    </ligand>
</feature>
<feature type="binding site" evidence="1">
    <location>
        <position position="176"/>
    </location>
    <ligand>
        <name>NAD(+)</name>
        <dbReference type="ChEBI" id="CHEBI:57540"/>
    </ligand>
</feature>
<feature type="binding site" evidence="1">
    <location>
        <position position="196"/>
    </location>
    <ligand>
        <name>NAD(+)</name>
        <dbReference type="ChEBI" id="CHEBI:57540"/>
    </ligand>
</feature>
<feature type="binding site" evidence="1">
    <location>
        <position position="201"/>
    </location>
    <ligand>
        <name>NAD(+)</name>
        <dbReference type="ChEBI" id="CHEBI:57540"/>
    </ligand>
</feature>
<feature type="binding site" evidence="1">
    <location>
        <begin position="271"/>
        <end position="273"/>
    </location>
    <ligand>
        <name>NAD(+)</name>
        <dbReference type="ChEBI" id="CHEBI:57540"/>
    </ligand>
</feature>
<feature type="binding site" evidence="1">
    <location>
        <begin position="295"/>
        <end position="296"/>
    </location>
    <ligand>
        <name>NAD(+)</name>
        <dbReference type="ChEBI" id="CHEBI:57540"/>
    </ligand>
</feature>
<feature type="site" description="Important for catalytic activity for the proton relay mechanism but does not participate directly in the coordination of zinc atom" evidence="1">
    <location>
        <position position="149"/>
    </location>
</feature>
<comment type="function">
    <text evidence="1">Catalyzes the NAD(+)-dependent oxidation of L-threonine to 2-amino-3-ketobutyrate.</text>
</comment>
<comment type="catalytic activity">
    <reaction evidence="1">
        <text>L-threonine + NAD(+) = (2S)-2-amino-3-oxobutanoate + NADH + H(+)</text>
        <dbReference type="Rhea" id="RHEA:13161"/>
        <dbReference type="ChEBI" id="CHEBI:15378"/>
        <dbReference type="ChEBI" id="CHEBI:57540"/>
        <dbReference type="ChEBI" id="CHEBI:57926"/>
        <dbReference type="ChEBI" id="CHEBI:57945"/>
        <dbReference type="ChEBI" id="CHEBI:78948"/>
        <dbReference type="EC" id="1.1.1.103"/>
    </reaction>
</comment>
<comment type="cofactor">
    <cofactor evidence="1">
        <name>Zn(2+)</name>
        <dbReference type="ChEBI" id="CHEBI:29105"/>
    </cofactor>
    <text evidence="1">Binds 2 Zn(2+) ions per subunit.</text>
</comment>
<comment type="pathway">
    <text evidence="1">Amino-acid degradation; L-threonine degradation via oxydo-reductase pathway; glycine from L-threonine: step 1/2.</text>
</comment>
<comment type="subunit">
    <text evidence="1">Homotetramer.</text>
</comment>
<comment type="subcellular location">
    <subcellularLocation>
        <location evidence="1">Cytoplasm</location>
    </subcellularLocation>
</comment>
<comment type="similarity">
    <text evidence="1">Belongs to the zinc-containing alcohol dehydrogenase family.</text>
</comment>
<gene>
    <name evidence="1" type="primary">tdh</name>
    <name type="ordered locus">Fphi_0217</name>
</gene>